<gene>
    <name type="primary">B2M</name>
</gene>
<dbReference type="EMBL" id="AF032081">
    <property type="protein sequence ID" value="AAC52099.1"/>
    <property type="molecule type" value="Genomic_DNA"/>
</dbReference>
<dbReference type="EMBL" id="AF032080">
    <property type="protein sequence ID" value="AAC52099.1"/>
    <property type="status" value="JOINED"/>
    <property type="molecule type" value="Genomic_DNA"/>
</dbReference>
<dbReference type="RefSeq" id="XP_003928970.1">
    <property type="nucleotide sequence ID" value="XM_003928921.3"/>
</dbReference>
<dbReference type="SMR" id="O77534"/>
<dbReference type="STRING" id="39432.ENSSBOP00000023733"/>
<dbReference type="Ensembl" id="ENSSBOT00000040592.1">
    <property type="protein sequence ID" value="ENSSBOP00000023735.1"/>
    <property type="gene ID" value="ENSSBOG00000028380.1"/>
</dbReference>
<dbReference type="GeneID" id="101047890"/>
<dbReference type="KEGG" id="sbq:101047890"/>
<dbReference type="CTD" id="567"/>
<dbReference type="GeneTree" id="ENSGT00690000102227"/>
<dbReference type="OMA" id="EDVFSCR"/>
<dbReference type="Proteomes" id="UP000233220">
    <property type="component" value="Unplaced"/>
</dbReference>
<dbReference type="GO" id="GO:0005576">
    <property type="term" value="C:extracellular region"/>
    <property type="evidence" value="ECO:0007669"/>
    <property type="project" value="UniProtKB-SubCell"/>
</dbReference>
<dbReference type="GO" id="GO:0042612">
    <property type="term" value="C:MHC class I protein complex"/>
    <property type="evidence" value="ECO:0007669"/>
    <property type="project" value="UniProtKB-KW"/>
</dbReference>
<dbReference type="GO" id="GO:0002474">
    <property type="term" value="P:antigen processing and presentation of peptide antigen via MHC class I"/>
    <property type="evidence" value="ECO:0007669"/>
    <property type="project" value="UniProtKB-KW"/>
</dbReference>
<dbReference type="GO" id="GO:0006955">
    <property type="term" value="P:immune response"/>
    <property type="evidence" value="ECO:0007669"/>
    <property type="project" value="InterPro"/>
</dbReference>
<dbReference type="CDD" id="cd05770">
    <property type="entry name" value="IgC1_beta2m"/>
    <property type="match status" value="1"/>
</dbReference>
<dbReference type="FunFam" id="2.60.40.10:FF:001005">
    <property type="entry name" value="Beta-2-microglobulin"/>
    <property type="match status" value="1"/>
</dbReference>
<dbReference type="Gene3D" id="2.60.40.10">
    <property type="entry name" value="Immunoglobulins"/>
    <property type="match status" value="1"/>
</dbReference>
<dbReference type="InterPro" id="IPR015707">
    <property type="entry name" value="B2Microglobulin"/>
</dbReference>
<dbReference type="InterPro" id="IPR007110">
    <property type="entry name" value="Ig-like_dom"/>
</dbReference>
<dbReference type="InterPro" id="IPR036179">
    <property type="entry name" value="Ig-like_dom_sf"/>
</dbReference>
<dbReference type="InterPro" id="IPR013783">
    <property type="entry name" value="Ig-like_fold"/>
</dbReference>
<dbReference type="InterPro" id="IPR003006">
    <property type="entry name" value="Ig/MHC_CS"/>
</dbReference>
<dbReference type="InterPro" id="IPR003597">
    <property type="entry name" value="Ig_C1-set"/>
</dbReference>
<dbReference type="InterPro" id="IPR050160">
    <property type="entry name" value="MHC/Immunoglobulin"/>
</dbReference>
<dbReference type="PANTHER" id="PTHR19944:SF62">
    <property type="entry name" value="BETA-2-MICROGLOBULIN"/>
    <property type="match status" value="1"/>
</dbReference>
<dbReference type="PANTHER" id="PTHR19944">
    <property type="entry name" value="MHC CLASS II-RELATED"/>
    <property type="match status" value="1"/>
</dbReference>
<dbReference type="Pfam" id="PF07654">
    <property type="entry name" value="C1-set"/>
    <property type="match status" value="1"/>
</dbReference>
<dbReference type="SMART" id="SM00407">
    <property type="entry name" value="IGc1"/>
    <property type="match status" value="1"/>
</dbReference>
<dbReference type="SUPFAM" id="SSF48726">
    <property type="entry name" value="Immunoglobulin"/>
    <property type="match status" value="1"/>
</dbReference>
<dbReference type="PROSITE" id="PS50835">
    <property type="entry name" value="IG_LIKE"/>
    <property type="match status" value="1"/>
</dbReference>
<dbReference type="PROSITE" id="PS00290">
    <property type="entry name" value="IG_MHC"/>
    <property type="match status" value="1"/>
</dbReference>
<feature type="signal peptide" evidence="1">
    <location>
        <begin position="1"/>
        <end position="20"/>
    </location>
</feature>
<feature type="chain" id="PRO_0000018799" description="Beta-2-microglobulin">
    <location>
        <begin position="21"/>
        <end position="119"/>
    </location>
</feature>
<feature type="domain" description="Ig-like C1-type">
    <location>
        <begin position="25"/>
        <end position="114"/>
    </location>
</feature>
<feature type="disulfide bond" evidence="2">
    <location>
        <begin position="45"/>
        <end position="100"/>
    </location>
</feature>
<sequence>MARSVVAALLVLLSLSGLEAIQHAPKIQVYSRHPAENGKPNYLNCYVSGFHPSDIEVDLLKNGQKIENVEHSDLSFSKDWSFYLLYYTEFTPNEKDEYACRVSHVTFPTPKTVKWDRNM</sequence>
<name>B2MG_SAIBB</name>
<organism>
    <name type="scientific">Saimiri boliviensis boliviensis</name>
    <name type="common">Bolivian squirrel monkey</name>
    <dbReference type="NCBI Taxonomy" id="39432"/>
    <lineage>
        <taxon>Eukaryota</taxon>
        <taxon>Metazoa</taxon>
        <taxon>Chordata</taxon>
        <taxon>Craniata</taxon>
        <taxon>Vertebrata</taxon>
        <taxon>Euteleostomi</taxon>
        <taxon>Mammalia</taxon>
        <taxon>Eutheria</taxon>
        <taxon>Euarchontoglires</taxon>
        <taxon>Primates</taxon>
        <taxon>Haplorrhini</taxon>
        <taxon>Platyrrhini</taxon>
        <taxon>Cebidae</taxon>
        <taxon>Saimiriinae</taxon>
        <taxon>Saimiri</taxon>
    </lineage>
</organism>
<evidence type="ECO:0000250" key="1"/>
<evidence type="ECO:0000255" key="2">
    <source>
        <dbReference type="PROSITE-ProRule" id="PRU00114"/>
    </source>
</evidence>
<evidence type="ECO:0000305" key="3"/>
<protein>
    <recommendedName>
        <fullName>Beta-2-microglobulin</fullName>
    </recommendedName>
</protein>
<proteinExistence type="inferred from homology"/>
<comment type="function">
    <text evidence="1">Component of the class I major histocompatibility complex (MHC). Involved in the presentation of peptide antigens to the immune system (By similarity).</text>
</comment>
<comment type="subunit">
    <text evidence="1">Heterodimer of an alpha chain and a beta chain. Beta-2-microglobulin is the beta-chain of major histocompatibility complex class I molecules (By similarity).</text>
</comment>
<comment type="subcellular location">
    <subcellularLocation>
        <location evidence="1">Secreted</location>
    </subcellularLocation>
</comment>
<comment type="similarity">
    <text evidence="3">Belongs to the beta-2-microglobulin family.</text>
</comment>
<reference key="1">
    <citation type="journal article" date="1998" name="Immunogenetics">
        <title>Beta-2-microglobulin in neotropical primates (Platyrrhini).</title>
        <authorList>
            <person name="Canavez F.C."/>
            <person name="Ladasky J.J."/>
            <person name="Muniz J.A.P.C."/>
            <person name="Seuanez H.N."/>
            <person name="Parham P."/>
        </authorList>
    </citation>
    <scope>NUCLEOTIDE SEQUENCE [GENOMIC DNA]</scope>
    <source>
        <tissue>Blood</tissue>
    </source>
</reference>
<accession>O77534</accession>
<keyword id="KW-1015">Disulfide bond</keyword>
<keyword id="KW-0391">Immunity</keyword>
<keyword id="KW-0393">Immunoglobulin domain</keyword>
<keyword id="KW-0490">MHC I</keyword>
<keyword id="KW-1185">Reference proteome</keyword>
<keyword id="KW-0964">Secreted</keyword>
<keyword id="KW-0732">Signal</keyword>